<accession>A4G1L3</accession>
<name>GATB_HERAR</name>
<sequence length="486" mass="53315">MQWEVVIGLETHTQLTTKTKIFSGSPTRFGAAPNTQTSPVDLALPGALPVMNRSAVERAIQFGLAIGATIAPYSVFARKNYFYPDLPKGYQISQMDLPIVQGGRVSFAMEVDGKTEIRSVQLTRAHLEEDAGKSLHEDYHGMTGIDLNRAGTPLLEIVTEPDMRSAAEAVAYAKALHTLVTWIGICDGNMQEGSFRCDANVSVRPVGQKEYGTRCEIKNLNSFRFMEDAINYEVRRQIELIEDGGRVVQATRLYDPDKKETREMRSKENAHDYRYFPDPDLPPLVVSAEWITRVQAEMPELPGAMRERFTREYGLSDYDAAVLTQSKAMANYFELICSIAGHEQAKPAANLLMGDVASAVNRDGIELDAAPVSAAQLAVLLHRIADGTISNKIAKEVFGAMWEAKSDSPTIADELIESKGLKQISDSGALEKIVDDVLAANTKSVEEFRAGKEQAINALMGQAMKASKGKANPAQLTELLKKKLSA</sequence>
<protein>
    <recommendedName>
        <fullName evidence="1">Aspartyl/glutamyl-tRNA(Asn/Gln) amidotransferase subunit B</fullName>
        <shortName evidence="1">Asp/Glu-ADT subunit B</shortName>
        <ecNumber evidence="1">6.3.5.-</ecNumber>
    </recommendedName>
</protein>
<proteinExistence type="inferred from homology"/>
<gene>
    <name evidence="1" type="primary">gatB</name>
    <name type="ordered locus">HEAR0165</name>
</gene>
<organism>
    <name type="scientific">Herminiimonas arsenicoxydans</name>
    <dbReference type="NCBI Taxonomy" id="204773"/>
    <lineage>
        <taxon>Bacteria</taxon>
        <taxon>Pseudomonadati</taxon>
        <taxon>Pseudomonadota</taxon>
        <taxon>Betaproteobacteria</taxon>
        <taxon>Burkholderiales</taxon>
        <taxon>Oxalobacteraceae</taxon>
        <taxon>Herminiimonas</taxon>
    </lineage>
</organism>
<comment type="function">
    <text evidence="1">Allows the formation of correctly charged Asn-tRNA(Asn) or Gln-tRNA(Gln) through the transamidation of misacylated Asp-tRNA(Asn) or Glu-tRNA(Gln) in organisms which lack either or both of asparaginyl-tRNA or glutaminyl-tRNA synthetases. The reaction takes place in the presence of glutamine and ATP through an activated phospho-Asp-tRNA(Asn) or phospho-Glu-tRNA(Gln).</text>
</comment>
<comment type="catalytic activity">
    <reaction evidence="1">
        <text>L-glutamyl-tRNA(Gln) + L-glutamine + ATP + H2O = L-glutaminyl-tRNA(Gln) + L-glutamate + ADP + phosphate + H(+)</text>
        <dbReference type="Rhea" id="RHEA:17521"/>
        <dbReference type="Rhea" id="RHEA-COMP:9681"/>
        <dbReference type="Rhea" id="RHEA-COMP:9684"/>
        <dbReference type="ChEBI" id="CHEBI:15377"/>
        <dbReference type="ChEBI" id="CHEBI:15378"/>
        <dbReference type="ChEBI" id="CHEBI:29985"/>
        <dbReference type="ChEBI" id="CHEBI:30616"/>
        <dbReference type="ChEBI" id="CHEBI:43474"/>
        <dbReference type="ChEBI" id="CHEBI:58359"/>
        <dbReference type="ChEBI" id="CHEBI:78520"/>
        <dbReference type="ChEBI" id="CHEBI:78521"/>
        <dbReference type="ChEBI" id="CHEBI:456216"/>
    </reaction>
</comment>
<comment type="catalytic activity">
    <reaction evidence="1">
        <text>L-aspartyl-tRNA(Asn) + L-glutamine + ATP + H2O = L-asparaginyl-tRNA(Asn) + L-glutamate + ADP + phosphate + 2 H(+)</text>
        <dbReference type="Rhea" id="RHEA:14513"/>
        <dbReference type="Rhea" id="RHEA-COMP:9674"/>
        <dbReference type="Rhea" id="RHEA-COMP:9677"/>
        <dbReference type="ChEBI" id="CHEBI:15377"/>
        <dbReference type="ChEBI" id="CHEBI:15378"/>
        <dbReference type="ChEBI" id="CHEBI:29985"/>
        <dbReference type="ChEBI" id="CHEBI:30616"/>
        <dbReference type="ChEBI" id="CHEBI:43474"/>
        <dbReference type="ChEBI" id="CHEBI:58359"/>
        <dbReference type="ChEBI" id="CHEBI:78515"/>
        <dbReference type="ChEBI" id="CHEBI:78516"/>
        <dbReference type="ChEBI" id="CHEBI:456216"/>
    </reaction>
</comment>
<comment type="subunit">
    <text evidence="1">Heterotrimer of A, B and C subunits.</text>
</comment>
<comment type="similarity">
    <text evidence="1">Belongs to the GatB/GatE family. GatB subfamily.</text>
</comment>
<dbReference type="EC" id="6.3.5.-" evidence="1"/>
<dbReference type="EMBL" id="CU207211">
    <property type="protein sequence ID" value="CAL60400.1"/>
    <property type="molecule type" value="Genomic_DNA"/>
</dbReference>
<dbReference type="SMR" id="A4G1L3"/>
<dbReference type="STRING" id="204773.HEAR0165"/>
<dbReference type="KEGG" id="har:HEAR0165"/>
<dbReference type="eggNOG" id="COG0064">
    <property type="taxonomic scope" value="Bacteria"/>
</dbReference>
<dbReference type="HOGENOM" id="CLU_019240_0_0_4"/>
<dbReference type="OrthoDB" id="9804078at2"/>
<dbReference type="Proteomes" id="UP000006697">
    <property type="component" value="Chromosome"/>
</dbReference>
<dbReference type="GO" id="GO:0050566">
    <property type="term" value="F:asparaginyl-tRNA synthase (glutamine-hydrolyzing) activity"/>
    <property type="evidence" value="ECO:0007669"/>
    <property type="project" value="RHEA"/>
</dbReference>
<dbReference type="GO" id="GO:0005524">
    <property type="term" value="F:ATP binding"/>
    <property type="evidence" value="ECO:0007669"/>
    <property type="project" value="UniProtKB-KW"/>
</dbReference>
<dbReference type="GO" id="GO:0050567">
    <property type="term" value="F:glutaminyl-tRNA synthase (glutamine-hydrolyzing) activity"/>
    <property type="evidence" value="ECO:0007669"/>
    <property type="project" value="UniProtKB-UniRule"/>
</dbReference>
<dbReference type="GO" id="GO:0070681">
    <property type="term" value="P:glutaminyl-tRNAGln biosynthesis via transamidation"/>
    <property type="evidence" value="ECO:0007669"/>
    <property type="project" value="TreeGrafter"/>
</dbReference>
<dbReference type="GO" id="GO:0006412">
    <property type="term" value="P:translation"/>
    <property type="evidence" value="ECO:0007669"/>
    <property type="project" value="UniProtKB-UniRule"/>
</dbReference>
<dbReference type="FunFam" id="1.10.10.410:FF:000001">
    <property type="entry name" value="Aspartyl/glutamyl-tRNA(Asn/Gln) amidotransferase subunit B"/>
    <property type="match status" value="1"/>
</dbReference>
<dbReference type="FunFam" id="1.10.150.380:FF:000001">
    <property type="entry name" value="Aspartyl/glutamyl-tRNA(Asn/Gln) amidotransferase subunit B"/>
    <property type="match status" value="1"/>
</dbReference>
<dbReference type="Gene3D" id="1.10.10.410">
    <property type="match status" value="1"/>
</dbReference>
<dbReference type="Gene3D" id="1.10.150.380">
    <property type="entry name" value="GatB domain, N-terminal subdomain"/>
    <property type="match status" value="1"/>
</dbReference>
<dbReference type="HAMAP" id="MF_00121">
    <property type="entry name" value="GatB"/>
    <property type="match status" value="1"/>
</dbReference>
<dbReference type="InterPro" id="IPR017959">
    <property type="entry name" value="Asn/Gln-tRNA_amidoTrfase_suB/E"/>
</dbReference>
<dbReference type="InterPro" id="IPR006075">
    <property type="entry name" value="Asn/Gln-tRNA_Trfase_suB/E_cat"/>
</dbReference>
<dbReference type="InterPro" id="IPR018027">
    <property type="entry name" value="Asn/Gln_amidotransferase"/>
</dbReference>
<dbReference type="InterPro" id="IPR003789">
    <property type="entry name" value="Asn/Gln_tRNA_amidoTrase-B-like"/>
</dbReference>
<dbReference type="InterPro" id="IPR004413">
    <property type="entry name" value="GatB"/>
</dbReference>
<dbReference type="InterPro" id="IPR042114">
    <property type="entry name" value="GatB_C_1"/>
</dbReference>
<dbReference type="InterPro" id="IPR023168">
    <property type="entry name" value="GatB_Yqey_C_2"/>
</dbReference>
<dbReference type="InterPro" id="IPR017958">
    <property type="entry name" value="Gln-tRNA_amidoTrfase_suB_CS"/>
</dbReference>
<dbReference type="InterPro" id="IPR014746">
    <property type="entry name" value="Gln_synth/guanido_kin_cat_dom"/>
</dbReference>
<dbReference type="NCBIfam" id="TIGR00133">
    <property type="entry name" value="gatB"/>
    <property type="match status" value="1"/>
</dbReference>
<dbReference type="NCBIfam" id="NF004012">
    <property type="entry name" value="PRK05477.1-2"/>
    <property type="match status" value="1"/>
</dbReference>
<dbReference type="NCBIfam" id="NF004014">
    <property type="entry name" value="PRK05477.1-4"/>
    <property type="match status" value="1"/>
</dbReference>
<dbReference type="NCBIfam" id="NF004015">
    <property type="entry name" value="PRK05477.1-5"/>
    <property type="match status" value="1"/>
</dbReference>
<dbReference type="PANTHER" id="PTHR11659">
    <property type="entry name" value="GLUTAMYL-TRNA GLN AMIDOTRANSFERASE SUBUNIT B MITOCHONDRIAL AND PROKARYOTIC PET112-RELATED"/>
    <property type="match status" value="1"/>
</dbReference>
<dbReference type="PANTHER" id="PTHR11659:SF0">
    <property type="entry name" value="GLUTAMYL-TRNA(GLN) AMIDOTRANSFERASE SUBUNIT B, MITOCHONDRIAL"/>
    <property type="match status" value="1"/>
</dbReference>
<dbReference type="Pfam" id="PF02934">
    <property type="entry name" value="GatB_N"/>
    <property type="match status" value="1"/>
</dbReference>
<dbReference type="Pfam" id="PF02637">
    <property type="entry name" value="GatB_Yqey"/>
    <property type="match status" value="1"/>
</dbReference>
<dbReference type="SMART" id="SM00845">
    <property type="entry name" value="GatB_Yqey"/>
    <property type="match status" value="1"/>
</dbReference>
<dbReference type="SUPFAM" id="SSF89095">
    <property type="entry name" value="GatB/YqeY motif"/>
    <property type="match status" value="1"/>
</dbReference>
<dbReference type="SUPFAM" id="SSF55931">
    <property type="entry name" value="Glutamine synthetase/guanido kinase"/>
    <property type="match status" value="1"/>
</dbReference>
<dbReference type="PROSITE" id="PS01234">
    <property type="entry name" value="GATB"/>
    <property type="match status" value="1"/>
</dbReference>
<keyword id="KW-0067">ATP-binding</keyword>
<keyword id="KW-0436">Ligase</keyword>
<keyword id="KW-0547">Nucleotide-binding</keyword>
<keyword id="KW-0648">Protein biosynthesis</keyword>
<keyword id="KW-1185">Reference proteome</keyword>
<reference key="1">
    <citation type="journal article" date="2007" name="PLoS Genet.">
        <title>A tale of two oxidation states: bacterial colonization of arsenic-rich environments.</title>
        <authorList>
            <person name="Muller D."/>
            <person name="Medigue C."/>
            <person name="Koechler S."/>
            <person name="Barbe V."/>
            <person name="Barakat M."/>
            <person name="Talla E."/>
            <person name="Bonnefoy V."/>
            <person name="Krin E."/>
            <person name="Arsene-Ploetze F."/>
            <person name="Carapito C."/>
            <person name="Chandler M."/>
            <person name="Cournoyer B."/>
            <person name="Cruveiller S."/>
            <person name="Dossat C."/>
            <person name="Duval S."/>
            <person name="Heymann M."/>
            <person name="Leize E."/>
            <person name="Lieutaud A."/>
            <person name="Lievremont D."/>
            <person name="Makita Y."/>
            <person name="Mangenot S."/>
            <person name="Nitschke W."/>
            <person name="Ortet P."/>
            <person name="Perdrial N."/>
            <person name="Schoepp B."/>
            <person name="Siguier P."/>
            <person name="Simeonova D.D."/>
            <person name="Rouy Z."/>
            <person name="Segurens B."/>
            <person name="Turlin E."/>
            <person name="Vallenet D."/>
            <person name="van Dorsselaer A."/>
            <person name="Weiss S."/>
            <person name="Weissenbach J."/>
            <person name="Lett M.-C."/>
            <person name="Danchin A."/>
            <person name="Bertin P.N."/>
        </authorList>
    </citation>
    <scope>NUCLEOTIDE SEQUENCE [LARGE SCALE GENOMIC DNA]</scope>
    <source>
        <strain>ULPAs1</strain>
    </source>
</reference>
<feature type="chain" id="PRO_1000015974" description="Aspartyl/glutamyl-tRNA(Asn/Gln) amidotransferase subunit B">
    <location>
        <begin position="1"/>
        <end position="486"/>
    </location>
</feature>
<evidence type="ECO:0000255" key="1">
    <source>
        <dbReference type="HAMAP-Rule" id="MF_00121"/>
    </source>
</evidence>